<reference key="1">
    <citation type="journal article" date="1991" name="Plant Cell Physiol.">
        <title>Structure of a co-transcribed gene cluster, ndh1-frxB-ndh6-ndh4L, cloned from the filamentous cyanobacterium Plectonema boryanum.</title>
        <authorList>
            <person name="Takahashi Y."/>
            <person name="Shonai F."/>
            <person name="Fujita Y."/>
            <person name="Kohchi T."/>
            <person name="Ohyama K."/>
            <person name="Matsubara H."/>
        </authorList>
    </citation>
    <scope>NUCLEOTIDE SEQUENCE [GENOMIC DNA]</scope>
    <source>
        <strain>ATCC 27894 / CCAP 1463/1 / IAM M-101 / PCC 6306 / UTEX 581</strain>
    </source>
</reference>
<feature type="chain" id="PRO_0000118366" description="NAD(P)H-quinone oxidoreductase chain 6">
    <location>
        <begin position="1"/>
        <end position="199"/>
    </location>
</feature>
<feature type="transmembrane region" description="Helical" evidence="2">
    <location>
        <begin position="9"/>
        <end position="29"/>
    </location>
</feature>
<feature type="transmembrane region" description="Helical" evidence="2">
    <location>
        <begin position="32"/>
        <end position="52"/>
    </location>
</feature>
<feature type="transmembrane region" description="Helical" evidence="2">
    <location>
        <begin position="61"/>
        <end position="81"/>
    </location>
</feature>
<feature type="transmembrane region" description="Helical" evidence="2">
    <location>
        <begin position="102"/>
        <end position="122"/>
    </location>
</feature>
<feature type="transmembrane region" description="Helical" evidence="2">
    <location>
        <begin position="143"/>
        <end position="163"/>
    </location>
</feature>
<comment type="function">
    <text evidence="1">NDH-1 shuttles electrons from NAD(P)H, via FMN and iron-sulfur (Fe-S) centers, to quinones in the respiratory chain. The immediate electron acceptor for the enzyme in this species is believed to be plastoquinone. Couples the redox reaction to proton translocation (for every two electrons transferred, four hydrogen ions are translocated across the cytoplasmic membrane), and thus conserves the redox energy in a proton gradient (By similarity).</text>
</comment>
<comment type="catalytic activity">
    <reaction>
        <text>a plastoquinone + NADH + (n+1) H(+)(in) = a plastoquinol + NAD(+) + n H(+)(out)</text>
        <dbReference type="Rhea" id="RHEA:42608"/>
        <dbReference type="Rhea" id="RHEA-COMP:9561"/>
        <dbReference type="Rhea" id="RHEA-COMP:9562"/>
        <dbReference type="ChEBI" id="CHEBI:15378"/>
        <dbReference type="ChEBI" id="CHEBI:17757"/>
        <dbReference type="ChEBI" id="CHEBI:57540"/>
        <dbReference type="ChEBI" id="CHEBI:57945"/>
        <dbReference type="ChEBI" id="CHEBI:62192"/>
    </reaction>
</comment>
<comment type="catalytic activity">
    <reaction>
        <text>a plastoquinone + NADPH + (n+1) H(+)(in) = a plastoquinol + NADP(+) + n H(+)(out)</text>
        <dbReference type="Rhea" id="RHEA:42612"/>
        <dbReference type="Rhea" id="RHEA-COMP:9561"/>
        <dbReference type="Rhea" id="RHEA-COMP:9562"/>
        <dbReference type="ChEBI" id="CHEBI:15378"/>
        <dbReference type="ChEBI" id="CHEBI:17757"/>
        <dbReference type="ChEBI" id="CHEBI:57783"/>
        <dbReference type="ChEBI" id="CHEBI:58349"/>
        <dbReference type="ChEBI" id="CHEBI:62192"/>
    </reaction>
</comment>
<comment type="subcellular location">
    <subcellularLocation>
        <location evidence="3">Membrane</location>
        <topology evidence="3">Multi-pass membrane protein</topology>
    </subcellularLocation>
</comment>
<comment type="similarity">
    <text evidence="3">Belongs to the complex I subunit 6 family.</text>
</comment>
<organism>
    <name type="scientific">Leptolyngbya boryana</name>
    <name type="common">Plectonema boryanum</name>
    <dbReference type="NCBI Taxonomy" id="1184"/>
    <lineage>
        <taxon>Bacteria</taxon>
        <taxon>Bacillati</taxon>
        <taxon>Cyanobacteriota</taxon>
        <taxon>Cyanophyceae</taxon>
        <taxon>Leptolyngbyales</taxon>
        <taxon>Leptolyngbyaceae</taxon>
        <taxon>Leptolyngbya group</taxon>
        <taxon>Leptolyngbya</taxon>
    </lineage>
</organism>
<name>NU6C_LEPBY</name>
<sequence length="199" mass="21299">MNLAEGVQIVSFAILAAMMIGSAIGVVLLENVVYSAFLLGGVFISIAGLYLLLNADFVAAAQVLIYVGAVNVLILFAIMLVNKREAFQPIAKSWIRRAATALVCAGIFALLSAMVLTTPWAISTAVPIESSIITIGLHFFTDFLLPFELASILLLMALVGAIVLARREFLPDEDEADTALTLPERPRELVPAGQNNPEN</sequence>
<keyword id="KW-0472">Membrane</keyword>
<keyword id="KW-0520">NAD</keyword>
<keyword id="KW-0521">NADP</keyword>
<keyword id="KW-0618">Plastoquinone</keyword>
<keyword id="KW-0874">Quinone</keyword>
<keyword id="KW-1278">Translocase</keyword>
<keyword id="KW-0812">Transmembrane</keyword>
<keyword id="KW-1133">Transmembrane helix</keyword>
<accession>Q00243</accession>
<gene>
    <name type="primary">ndhG</name>
    <name type="synonym">ndh6</name>
</gene>
<evidence type="ECO:0000250" key="1"/>
<evidence type="ECO:0000255" key="2"/>
<evidence type="ECO:0000305" key="3"/>
<protein>
    <recommendedName>
        <fullName>NAD(P)H-quinone oxidoreductase chain 6</fullName>
        <ecNumber>7.1.1.-</ecNumber>
    </recommendedName>
    <alternativeName>
        <fullName>NAD(P)H dehydrogenase I, chain 6</fullName>
    </alternativeName>
    <alternativeName>
        <fullName>NDH-1, chain 6</fullName>
    </alternativeName>
</protein>
<dbReference type="EC" id="7.1.1.-"/>
<dbReference type="EMBL" id="D01014">
    <property type="protein sequence ID" value="BAA00816.1"/>
    <property type="molecule type" value="Genomic_DNA"/>
</dbReference>
<dbReference type="PIR" id="JQ2137">
    <property type="entry name" value="JQ2137"/>
</dbReference>
<dbReference type="SMR" id="Q00243"/>
<dbReference type="GO" id="GO:1902495">
    <property type="term" value="C:transmembrane transporter complex"/>
    <property type="evidence" value="ECO:0007669"/>
    <property type="project" value="TreeGrafter"/>
</dbReference>
<dbReference type="GO" id="GO:0008137">
    <property type="term" value="F:NADH dehydrogenase (ubiquinone) activity"/>
    <property type="evidence" value="ECO:0007669"/>
    <property type="project" value="InterPro"/>
</dbReference>
<dbReference type="GO" id="GO:0048038">
    <property type="term" value="F:quinone binding"/>
    <property type="evidence" value="ECO:0007669"/>
    <property type="project" value="UniProtKB-KW"/>
</dbReference>
<dbReference type="FunFam" id="1.20.120.1200:FF:000002">
    <property type="entry name" value="NAD(P)H-quinone oxidoreductase subunit 6, chloroplastic"/>
    <property type="match status" value="1"/>
</dbReference>
<dbReference type="Gene3D" id="1.20.120.1200">
    <property type="entry name" value="NADH-ubiquinone/plastoquinone oxidoreductase chain 6, subunit NuoJ"/>
    <property type="match status" value="1"/>
</dbReference>
<dbReference type="InterPro" id="IPR001457">
    <property type="entry name" value="NADH_UbQ/plastoQ_OxRdtase_su6"/>
</dbReference>
<dbReference type="InterPro" id="IPR042106">
    <property type="entry name" value="Nuo/plastoQ_OxRdtase_6_NuoJ"/>
</dbReference>
<dbReference type="NCBIfam" id="NF005163">
    <property type="entry name" value="PRK06638.1-3"/>
    <property type="match status" value="1"/>
</dbReference>
<dbReference type="PANTHER" id="PTHR33269">
    <property type="entry name" value="NADH-UBIQUINONE OXIDOREDUCTASE CHAIN 6"/>
    <property type="match status" value="1"/>
</dbReference>
<dbReference type="PANTHER" id="PTHR33269:SF17">
    <property type="entry name" value="NADH-UBIQUINONE OXIDOREDUCTASE CHAIN 6"/>
    <property type="match status" value="1"/>
</dbReference>
<dbReference type="Pfam" id="PF00499">
    <property type="entry name" value="Oxidored_q3"/>
    <property type="match status" value="1"/>
</dbReference>
<proteinExistence type="inferred from homology"/>